<feature type="chain" id="PRO_1000201659" description="Adenine phosphoribosyltransferase">
    <location>
        <begin position="1"/>
        <end position="170"/>
    </location>
</feature>
<evidence type="ECO:0000255" key="1">
    <source>
        <dbReference type="HAMAP-Rule" id="MF_00004"/>
    </source>
</evidence>
<dbReference type="EC" id="2.4.2.7" evidence="1"/>
<dbReference type="EMBL" id="CP001649">
    <property type="protein sequence ID" value="ACS79664.1"/>
    <property type="molecule type" value="Genomic_DNA"/>
</dbReference>
<dbReference type="RefSeq" id="WP_015851482.1">
    <property type="nucleotide sequence ID" value="NC_012881.1"/>
</dbReference>
<dbReference type="SMR" id="C6BSW0"/>
<dbReference type="STRING" id="526222.Desal_1602"/>
<dbReference type="KEGG" id="dsa:Desal_1602"/>
<dbReference type="eggNOG" id="COG0503">
    <property type="taxonomic scope" value="Bacteria"/>
</dbReference>
<dbReference type="HOGENOM" id="CLU_063339_3_0_7"/>
<dbReference type="OrthoDB" id="9803963at2"/>
<dbReference type="UniPathway" id="UPA00588">
    <property type="reaction ID" value="UER00646"/>
</dbReference>
<dbReference type="Proteomes" id="UP000002601">
    <property type="component" value="Chromosome"/>
</dbReference>
<dbReference type="GO" id="GO:0005737">
    <property type="term" value="C:cytoplasm"/>
    <property type="evidence" value="ECO:0007669"/>
    <property type="project" value="UniProtKB-SubCell"/>
</dbReference>
<dbReference type="GO" id="GO:0002055">
    <property type="term" value="F:adenine binding"/>
    <property type="evidence" value="ECO:0007669"/>
    <property type="project" value="TreeGrafter"/>
</dbReference>
<dbReference type="GO" id="GO:0003999">
    <property type="term" value="F:adenine phosphoribosyltransferase activity"/>
    <property type="evidence" value="ECO:0007669"/>
    <property type="project" value="UniProtKB-UniRule"/>
</dbReference>
<dbReference type="GO" id="GO:0016208">
    <property type="term" value="F:AMP binding"/>
    <property type="evidence" value="ECO:0007669"/>
    <property type="project" value="TreeGrafter"/>
</dbReference>
<dbReference type="GO" id="GO:0006168">
    <property type="term" value="P:adenine salvage"/>
    <property type="evidence" value="ECO:0007669"/>
    <property type="project" value="InterPro"/>
</dbReference>
<dbReference type="GO" id="GO:0044209">
    <property type="term" value="P:AMP salvage"/>
    <property type="evidence" value="ECO:0007669"/>
    <property type="project" value="UniProtKB-UniRule"/>
</dbReference>
<dbReference type="GO" id="GO:0006166">
    <property type="term" value="P:purine ribonucleoside salvage"/>
    <property type="evidence" value="ECO:0007669"/>
    <property type="project" value="UniProtKB-KW"/>
</dbReference>
<dbReference type="CDD" id="cd06223">
    <property type="entry name" value="PRTases_typeI"/>
    <property type="match status" value="1"/>
</dbReference>
<dbReference type="FunFam" id="3.40.50.2020:FF:000004">
    <property type="entry name" value="Adenine phosphoribosyltransferase"/>
    <property type="match status" value="1"/>
</dbReference>
<dbReference type="Gene3D" id="3.40.50.2020">
    <property type="match status" value="1"/>
</dbReference>
<dbReference type="HAMAP" id="MF_00004">
    <property type="entry name" value="Aden_phosphoribosyltr"/>
    <property type="match status" value="1"/>
</dbReference>
<dbReference type="InterPro" id="IPR005764">
    <property type="entry name" value="Ade_phspho_trans"/>
</dbReference>
<dbReference type="InterPro" id="IPR000836">
    <property type="entry name" value="PRibTrfase_dom"/>
</dbReference>
<dbReference type="InterPro" id="IPR029057">
    <property type="entry name" value="PRTase-like"/>
</dbReference>
<dbReference type="InterPro" id="IPR050054">
    <property type="entry name" value="UPRTase/APRTase"/>
</dbReference>
<dbReference type="NCBIfam" id="TIGR01090">
    <property type="entry name" value="apt"/>
    <property type="match status" value="1"/>
</dbReference>
<dbReference type="NCBIfam" id="NF002634">
    <property type="entry name" value="PRK02304.1-3"/>
    <property type="match status" value="1"/>
</dbReference>
<dbReference type="NCBIfam" id="NF002636">
    <property type="entry name" value="PRK02304.1-5"/>
    <property type="match status" value="1"/>
</dbReference>
<dbReference type="PANTHER" id="PTHR32315">
    <property type="entry name" value="ADENINE PHOSPHORIBOSYLTRANSFERASE"/>
    <property type="match status" value="1"/>
</dbReference>
<dbReference type="PANTHER" id="PTHR32315:SF3">
    <property type="entry name" value="ADENINE PHOSPHORIBOSYLTRANSFERASE"/>
    <property type="match status" value="1"/>
</dbReference>
<dbReference type="Pfam" id="PF00156">
    <property type="entry name" value="Pribosyltran"/>
    <property type="match status" value="1"/>
</dbReference>
<dbReference type="SUPFAM" id="SSF53271">
    <property type="entry name" value="PRTase-like"/>
    <property type="match status" value="1"/>
</dbReference>
<dbReference type="PROSITE" id="PS00103">
    <property type="entry name" value="PUR_PYR_PR_TRANSFER"/>
    <property type="match status" value="1"/>
</dbReference>
<proteinExistence type="inferred from homology"/>
<accession>C6BSW0</accession>
<organism>
    <name type="scientific">Maridesulfovibrio salexigens (strain ATCC 14822 / DSM 2638 / NCIMB 8403 / VKM B-1763)</name>
    <name type="common">Desulfovibrio salexigens</name>
    <dbReference type="NCBI Taxonomy" id="526222"/>
    <lineage>
        <taxon>Bacteria</taxon>
        <taxon>Pseudomonadati</taxon>
        <taxon>Thermodesulfobacteriota</taxon>
        <taxon>Desulfovibrionia</taxon>
        <taxon>Desulfovibrionales</taxon>
        <taxon>Desulfovibrionaceae</taxon>
        <taxon>Maridesulfovibrio</taxon>
    </lineage>
</organism>
<sequence>MNLRDYIRDIPDFPKEGIVYFDITPLLAEPKAFQYTIDQLAERFADYKIDKIAAAEARGFIFGAPLATKLDIGFVPIRKPGKLPYETISVSYDLEYGTDNLSMHVDAVAKDENVLLIDDVLATGGTAEGMVKLVEKAGGKVSGMGFIAELTFLDGKSKLSGIDTTSLIQL</sequence>
<comment type="function">
    <text evidence="1">Catalyzes a salvage reaction resulting in the formation of AMP, that is energically less costly than de novo synthesis.</text>
</comment>
<comment type="catalytic activity">
    <reaction evidence="1">
        <text>AMP + diphosphate = 5-phospho-alpha-D-ribose 1-diphosphate + adenine</text>
        <dbReference type="Rhea" id="RHEA:16609"/>
        <dbReference type="ChEBI" id="CHEBI:16708"/>
        <dbReference type="ChEBI" id="CHEBI:33019"/>
        <dbReference type="ChEBI" id="CHEBI:58017"/>
        <dbReference type="ChEBI" id="CHEBI:456215"/>
        <dbReference type="EC" id="2.4.2.7"/>
    </reaction>
</comment>
<comment type="pathway">
    <text evidence="1">Purine metabolism; AMP biosynthesis via salvage pathway; AMP from adenine: step 1/1.</text>
</comment>
<comment type="subunit">
    <text evidence="1">Homodimer.</text>
</comment>
<comment type="subcellular location">
    <subcellularLocation>
        <location evidence="1">Cytoplasm</location>
    </subcellularLocation>
</comment>
<comment type="similarity">
    <text evidence="1">Belongs to the purine/pyrimidine phosphoribosyltransferase family.</text>
</comment>
<protein>
    <recommendedName>
        <fullName evidence="1">Adenine phosphoribosyltransferase</fullName>
        <shortName evidence="1">APRT</shortName>
        <ecNumber evidence="1">2.4.2.7</ecNumber>
    </recommendedName>
</protein>
<gene>
    <name evidence="1" type="primary">apt</name>
    <name type="ordered locus">Desal_1602</name>
</gene>
<reference key="1">
    <citation type="submission" date="2009-06" db="EMBL/GenBank/DDBJ databases">
        <title>Complete sequence of Desulfovibrio salexigens DSM 2638.</title>
        <authorList>
            <consortium name="US DOE Joint Genome Institute"/>
            <person name="Lucas S."/>
            <person name="Copeland A."/>
            <person name="Lapidus A."/>
            <person name="Glavina del Rio T."/>
            <person name="Tice H."/>
            <person name="Bruce D."/>
            <person name="Goodwin L."/>
            <person name="Pitluck S."/>
            <person name="Munk A.C."/>
            <person name="Brettin T."/>
            <person name="Detter J.C."/>
            <person name="Han C."/>
            <person name="Tapia R."/>
            <person name="Larimer F."/>
            <person name="Land M."/>
            <person name="Hauser L."/>
            <person name="Kyrpides N."/>
            <person name="Anderson I."/>
            <person name="Wall J.D."/>
            <person name="Arkin A.P."/>
            <person name="Dehal P."/>
            <person name="Chivian D."/>
            <person name="Giles B."/>
            <person name="Hazen T.C."/>
        </authorList>
    </citation>
    <scope>NUCLEOTIDE SEQUENCE [LARGE SCALE GENOMIC DNA]</scope>
    <source>
        <strain>ATCC 14822 / DSM 2638 / NCIMB 8403 / VKM B-1763</strain>
    </source>
</reference>
<keyword id="KW-0963">Cytoplasm</keyword>
<keyword id="KW-0328">Glycosyltransferase</keyword>
<keyword id="KW-0660">Purine salvage</keyword>
<keyword id="KW-1185">Reference proteome</keyword>
<keyword id="KW-0808">Transferase</keyword>
<name>APT_MARSD</name>